<dbReference type="EMBL" id="AB014556">
    <property type="protein sequence ID" value="BAA31631.2"/>
    <property type="status" value="ALT_INIT"/>
    <property type="molecule type" value="mRNA"/>
</dbReference>
<dbReference type="EMBL" id="AK289582">
    <property type="protein sequence ID" value="BAF82271.1"/>
    <property type="molecule type" value="mRNA"/>
</dbReference>
<dbReference type="EMBL" id="CR749348">
    <property type="protein sequence ID" value="CAH18201.1"/>
    <property type="status" value="ALT_SEQ"/>
    <property type="molecule type" value="mRNA"/>
</dbReference>
<dbReference type="EMBL" id="AL109915">
    <property type="status" value="NOT_ANNOTATED_CDS"/>
    <property type="molecule type" value="Genomic_DNA"/>
</dbReference>
<dbReference type="EMBL" id="AL136972">
    <property type="status" value="NOT_ANNOTATED_CDS"/>
    <property type="molecule type" value="Genomic_DNA"/>
</dbReference>
<dbReference type="EMBL" id="AF054993">
    <property type="protein sequence ID" value="AAC09352.1"/>
    <property type="molecule type" value="mRNA"/>
</dbReference>
<dbReference type="EMBL" id="BC060818">
    <property type="protein sequence ID" value="AAH60818.1"/>
    <property type="molecule type" value="mRNA"/>
</dbReference>
<dbReference type="CCDS" id="CCDS47455.1">
    <molecule id="O60641-1"/>
</dbReference>
<dbReference type="CCDS" id="CCDS56437.1">
    <molecule id="O60641-3"/>
</dbReference>
<dbReference type="CCDS" id="CCDS56438.1">
    <molecule id="O60641-4"/>
</dbReference>
<dbReference type="RefSeq" id="NP_001229721.1">
    <molecule id="O60641-1"/>
    <property type="nucleotide sequence ID" value="NM_001242792.2"/>
</dbReference>
<dbReference type="RefSeq" id="NP_001229722.1">
    <molecule id="O60641-4"/>
    <property type="nucleotide sequence ID" value="NM_001242793.2"/>
</dbReference>
<dbReference type="RefSeq" id="NP_001229723.1">
    <molecule id="O60641-3"/>
    <property type="nucleotide sequence ID" value="NM_001242794.2"/>
</dbReference>
<dbReference type="RefSeq" id="NP_001243646.1">
    <property type="nucleotide sequence ID" value="NM_001256717.1"/>
</dbReference>
<dbReference type="RefSeq" id="NP_001243647.1">
    <property type="nucleotide sequence ID" value="NM_001256718.1"/>
</dbReference>
<dbReference type="RefSeq" id="NP_001363637.1">
    <molecule id="O60641-4"/>
    <property type="nucleotide sequence ID" value="NM_001376708.1"/>
</dbReference>
<dbReference type="RefSeq" id="NP_001363638.1">
    <molecule id="O60641-4"/>
    <property type="nucleotide sequence ID" value="NM_001376709.1"/>
</dbReference>
<dbReference type="RefSeq" id="NP_001363639.1">
    <molecule id="O60641-4"/>
    <property type="nucleotide sequence ID" value="NM_001376710.1"/>
</dbReference>
<dbReference type="RefSeq" id="NP_001363640.1">
    <molecule id="O60641-4"/>
    <property type="nucleotide sequence ID" value="NM_001376711.1"/>
</dbReference>
<dbReference type="RefSeq" id="NP_055656.1">
    <molecule id="O60641-1"/>
    <property type="nucleotide sequence ID" value="NM_014841.3"/>
</dbReference>
<dbReference type="RefSeq" id="XP_005248827.1">
    <property type="nucleotide sequence ID" value="XM_005248770.4"/>
</dbReference>
<dbReference type="RefSeq" id="XP_006715678.1">
    <property type="nucleotide sequence ID" value="XM_006715615.1"/>
</dbReference>
<dbReference type="RefSeq" id="XP_011534567.1">
    <property type="nucleotide sequence ID" value="XM_011536265.1"/>
</dbReference>
<dbReference type="RefSeq" id="XP_011534568.1">
    <property type="nucleotide sequence ID" value="XM_011536266.1"/>
</dbReference>
<dbReference type="SMR" id="O60641"/>
<dbReference type="BioGRID" id="115222">
    <property type="interactions" value="59"/>
</dbReference>
<dbReference type="ELM" id="O60641"/>
<dbReference type="FunCoup" id="O60641">
    <property type="interactions" value="753"/>
</dbReference>
<dbReference type="IntAct" id="O60641">
    <property type="interactions" value="46"/>
</dbReference>
<dbReference type="MINT" id="O60641"/>
<dbReference type="STRING" id="9606.ENSP00000400459"/>
<dbReference type="GlyConnect" id="64">
    <property type="glycosylation" value="1 O-GlcNAc glycan"/>
</dbReference>
<dbReference type="GlyCosmos" id="O60641">
    <property type="glycosylation" value="7 sites, 1 glycan"/>
</dbReference>
<dbReference type="GlyGen" id="O60641">
    <property type="glycosylation" value="15 sites, 1 O-linked glycan (8 sites)"/>
</dbReference>
<dbReference type="iPTMnet" id="O60641"/>
<dbReference type="PhosphoSitePlus" id="O60641"/>
<dbReference type="SwissPalm" id="O60641"/>
<dbReference type="BioMuta" id="SNAP91"/>
<dbReference type="jPOST" id="O60641"/>
<dbReference type="MassIVE" id="O60641"/>
<dbReference type="PaxDb" id="9606-ENSP00000400459"/>
<dbReference type="PeptideAtlas" id="O60641"/>
<dbReference type="ProteomicsDB" id="16144"/>
<dbReference type="ProteomicsDB" id="49493">
    <molecule id="O60641-1"/>
</dbReference>
<dbReference type="ProteomicsDB" id="49494">
    <molecule id="O60641-2"/>
</dbReference>
<dbReference type="ProteomicsDB" id="49495">
    <molecule id="O60641-3"/>
</dbReference>
<dbReference type="Antibodypedia" id="4056">
    <property type="antibodies" value="107 antibodies from 22 providers"/>
</dbReference>
<dbReference type="DNASU" id="9892"/>
<dbReference type="Ensembl" id="ENST00000369694.7">
    <molecule id="O60641-1"/>
    <property type="protein sequence ID" value="ENSP00000358708.2"/>
    <property type="gene ID" value="ENSG00000065609.15"/>
</dbReference>
<dbReference type="Ensembl" id="ENST00000439399.6">
    <molecule id="O60641-1"/>
    <property type="protein sequence ID" value="ENSP00000400459.2"/>
    <property type="gene ID" value="ENSG00000065609.15"/>
</dbReference>
<dbReference type="Ensembl" id="ENST00000520213.5">
    <molecule id="O60641-3"/>
    <property type="protein sequence ID" value="ENSP00000428026.1"/>
    <property type="gene ID" value="ENSG00000065609.15"/>
</dbReference>
<dbReference type="Ensembl" id="ENST00000520302.5">
    <molecule id="O60641-4"/>
    <property type="protein sequence ID" value="ENSP00000428511.1"/>
    <property type="gene ID" value="ENSG00000065609.15"/>
</dbReference>
<dbReference type="Ensembl" id="ENST00000521743.5">
    <molecule id="O60641-1"/>
    <property type="protein sequence ID" value="ENSP00000428215.1"/>
    <property type="gene ID" value="ENSG00000065609.15"/>
</dbReference>
<dbReference type="GeneID" id="9892"/>
<dbReference type="KEGG" id="hsa:9892"/>
<dbReference type="MANE-Select" id="ENST00000369694.7">
    <property type="protein sequence ID" value="ENSP00000358708.2"/>
    <property type="RefSeq nucleotide sequence ID" value="NM_001242792.2"/>
    <property type="RefSeq protein sequence ID" value="NP_001229721.1"/>
</dbReference>
<dbReference type="UCSC" id="uc003pkc.4">
    <molecule id="O60641-1"/>
    <property type="organism name" value="human"/>
</dbReference>
<dbReference type="AGR" id="HGNC:14986"/>
<dbReference type="CTD" id="9892"/>
<dbReference type="DisGeNET" id="9892"/>
<dbReference type="GeneCards" id="SNAP91"/>
<dbReference type="HGNC" id="HGNC:14986">
    <property type="gene designation" value="SNAP91"/>
</dbReference>
<dbReference type="HPA" id="ENSG00000065609">
    <property type="expression patterns" value="Tissue enhanced (brain, retina)"/>
</dbReference>
<dbReference type="MIM" id="607923">
    <property type="type" value="gene"/>
</dbReference>
<dbReference type="neXtProt" id="NX_O60641"/>
<dbReference type="OpenTargets" id="ENSG00000065609"/>
<dbReference type="PharmGKB" id="PA37956"/>
<dbReference type="VEuPathDB" id="HostDB:ENSG00000065609"/>
<dbReference type="eggNOG" id="KOG0251">
    <property type="taxonomic scope" value="Eukaryota"/>
</dbReference>
<dbReference type="GeneTree" id="ENSGT00950000183068"/>
<dbReference type="HOGENOM" id="CLU_014080_3_0_1"/>
<dbReference type="InParanoid" id="O60641"/>
<dbReference type="OMA" id="VPNLKHA"/>
<dbReference type="OrthoDB" id="44015at2759"/>
<dbReference type="PAN-GO" id="O60641">
    <property type="GO annotations" value="10 GO annotations based on evolutionary models"/>
</dbReference>
<dbReference type="PhylomeDB" id="O60641"/>
<dbReference type="TreeFam" id="TF314861"/>
<dbReference type="PathwayCommons" id="O60641"/>
<dbReference type="Reactome" id="R-HSA-8856825">
    <property type="pathway name" value="Cargo recognition for clathrin-mediated endocytosis"/>
</dbReference>
<dbReference type="Reactome" id="R-HSA-8856828">
    <property type="pathway name" value="Clathrin-mediated endocytosis"/>
</dbReference>
<dbReference type="SignaLink" id="O60641"/>
<dbReference type="SIGNOR" id="O60641"/>
<dbReference type="BioGRID-ORCS" id="9892">
    <property type="hits" value="20 hits in 1140 CRISPR screens"/>
</dbReference>
<dbReference type="CD-CODE" id="91857CE7">
    <property type="entry name" value="Nucleolus"/>
</dbReference>
<dbReference type="CD-CODE" id="FB4E32DD">
    <property type="entry name" value="Presynaptic clusters and postsynaptic densities"/>
</dbReference>
<dbReference type="ChiTaRS" id="SNAP91">
    <property type="organism name" value="human"/>
</dbReference>
<dbReference type="GeneWiki" id="SNAP91"/>
<dbReference type="GenomeRNAi" id="9892"/>
<dbReference type="Pharos" id="O60641">
    <property type="development level" value="Tbio"/>
</dbReference>
<dbReference type="PRO" id="PR:O60641"/>
<dbReference type="Proteomes" id="UP000005640">
    <property type="component" value="Chromosome 6"/>
</dbReference>
<dbReference type="RNAct" id="O60641">
    <property type="molecule type" value="protein"/>
</dbReference>
<dbReference type="Bgee" id="ENSG00000065609">
    <property type="expression patterns" value="Expressed in middle temporal gyrus and 142 other cell types or tissues"/>
</dbReference>
<dbReference type="ExpressionAtlas" id="O60641">
    <property type="expression patterns" value="baseline and differential"/>
</dbReference>
<dbReference type="GO" id="GO:0005905">
    <property type="term" value="C:clathrin-coated pit"/>
    <property type="evidence" value="ECO:0000318"/>
    <property type="project" value="GO_Central"/>
</dbReference>
<dbReference type="GO" id="GO:0030136">
    <property type="term" value="C:clathrin-coated vesicle"/>
    <property type="evidence" value="ECO:0000318"/>
    <property type="project" value="GO_Central"/>
</dbReference>
<dbReference type="GO" id="GO:0098894">
    <property type="term" value="C:extrinsic component of presynaptic endocytic zone membrane"/>
    <property type="evidence" value="ECO:0000318"/>
    <property type="project" value="GO_Central"/>
</dbReference>
<dbReference type="GO" id="GO:0008021">
    <property type="term" value="C:synaptic vesicle"/>
    <property type="evidence" value="ECO:0000318"/>
    <property type="project" value="GO_Central"/>
</dbReference>
<dbReference type="GO" id="GO:0005545">
    <property type="term" value="F:1-phosphatidylinositol binding"/>
    <property type="evidence" value="ECO:0000318"/>
    <property type="project" value="GO_Central"/>
</dbReference>
<dbReference type="GO" id="GO:0032050">
    <property type="term" value="F:clathrin heavy chain binding"/>
    <property type="evidence" value="ECO:0000318"/>
    <property type="project" value="GO_Central"/>
</dbReference>
<dbReference type="GO" id="GO:0005546">
    <property type="term" value="F:phosphatidylinositol-4,5-bisphosphate binding"/>
    <property type="evidence" value="ECO:0000318"/>
    <property type="project" value="GO_Central"/>
</dbReference>
<dbReference type="GO" id="GO:0019901">
    <property type="term" value="F:protein kinase binding"/>
    <property type="evidence" value="ECO:0000250"/>
    <property type="project" value="ParkinsonsUK-UCL"/>
</dbReference>
<dbReference type="GO" id="GO:0000149">
    <property type="term" value="F:SNARE binding"/>
    <property type="evidence" value="ECO:0000318"/>
    <property type="project" value="GO_Central"/>
</dbReference>
<dbReference type="GO" id="GO:0048268">
    <property type="term" value="P:clathrin coat assembly"/>
    <property type="evidence" value="ECO:0007669"/>
    <property type="project" value="InterPro"/>
</dbReference>
<dbReference type="GO" id="GO:0072583">
    <property type="term" value="P:clathrin-dependent endocytosis"/>
    <property type="evidence" value="ECO:0000318"/>
    <property type="project" value="GO_Central"/>
</dbReference>
<dbReference type="GO" id="GO:0015031">
    <property type="term" value="P:protein transport"/>
    <property type="evidence" value="ECO:0007669"/>
    <property type="project" value="UniProtKB-KW"/>
</dbReference>
<dbReference type="GO" id="GO:2000369">
    <property type="term" value="P:regulation of clathrin-dependent endocytosis"/>
    <property type="evidence" value="ECO:0000315"/>
    <property type="project" value="MGI"/>
</dbReference>
<dbReference type="GO" id="GO:0006900">
    <property type="term" value="P:vesicle budding from membrane"/>
    <property type="evidence" value="ECO:0000318"/>
    <property type="project" value="GO_Central"/>
</dbReference>
<dbReference type="CDD" id="cd16985">
    <property type="entry name" value="ANTH_N_AP180"/>
    <property type="match status" value="1"/>
</dbReference>
<dbReference type="FunFam" id="1.20.58.150:FF:000002">
    <property type="entry name" value="clathrin coat assembly protein AP180"/>
    <property type="match status" value="1"/>
</dbReference>
<dbReference type="FunFam" id="1.25.40.90:FF:000001">
    <property type="entry name" value="phosphatidylinositol-binding clathrin assembly protein-like isoform X1"/>
    <property type="match status" value="1"/>
</dbReference>
<dbReference type="Gene3D" id="1.25.40.90">
    <property type="match status" value="1"/>
</dbReference>
<dbReference type="Gene3D" id="1.20.58.150">
    <property type="entry name" value="ANTH domain"/>
    <property type="match status" value="1"/>
</dbReference>
<dbReference type="InterPro" id="IPR011417">
    <property type="entry name" value="ANTH_dom"/>
</dbReference>
<dbReference type="InterPro" id="IPR014712">
    <property type="entry name" value="ANTH_dom_sf"/>
</dbReference>
<dbReference type="InterPro" id="IPR045192">
    <property type="entry name" value="AP180-like"/>
</dbReference>
<dbReference type="InterPro" id="IPR013809">
    <property type="entry name" value="ENTH"/>
</dbReference>
<dbReference type="InterPro" id="IPR008942">
    <property type="entry name" value="ENTH_VHS"/>
</dbReference>
<dbReference type="PANTHER" id="PTHR22951">
    <property type="entry name" value="CLATHRIN ASSEMBLY PROTEIN"/>
    <property type="match status" value="1"/>
</dbReference>
<dbReference type="PANTHER" id="PTHR22951:SF4">
    <property type="entry name" value="CLATHRIN COAT ASSEMBLY PROTEIN AP180"/>
    <property type="match status" value="1"/>
</dbReference>
<dbReference type="Pfam" id="PF07651">
    <property type="entry name" value="ANTH"/>
    <property type="match status" value="1"/>
</dbReference>
<dbReference type="SMART" id="SM00273">
    <property type="entry name" value="ENTH"/>
    <property type="match status" value="1"/>
</dbReference>
<dbReference type="SUPFAM" id="SSF48464">
    <property type="entry name" value="ENTH/VHS domain"/>
    <property type="match status" value="1"/>
</dbReference>
<dbReference type="SUPFAM" id="SSF89009">
    <property type="entry name" value="GAT-like domain"/>
    <property type="match status" value="1"/>
</dbReference>
<dbReference type="PROSITE" id="PS50942">
    <property type="entry name" value="ENTH"/>
    <property type="match status" value="1"/>
</dbReference>
<sequence>MSGQTLTDRIAAAQYSVTGSAVARAVCKATTHEVMGPKKKHLDYLIQATNETNVNIPQMADTLFERATNSSWVVVFKALVTTHHLMVHGNERFIQYLASRNTLFNLSNFLDKSGSHGYDMSTFIRRYSRYLNEKAFSYRQMAFDFARVKKGADGVMRTMAPEKLLKSMPILQGQIDALLEFDVHPNELTNGVINAAFMLLFKDLIKLFACYNDGVINLLEKFFEMKKGQCKDALEIYKRFLTRMTRVSEFLKVAEQVGIDKGDIPDLTQAPSSLMETLEQHLNTLEGKKPGNNEGSGAPSPLSKSSPATTVTSPNSTPAKTIDTSPPVDLFATASAAVPVSTSKPSSDLLDLQPDFSSGGAAAAAAPAPPPPAGGATAWGDLLGEDSLAALSSVPSEAQISDPFAPEPTPPTTTAEIATASASASTTTTVTAVTAEVDLFGDAFAASPGEAPAASEGAAAPATPTPVAAALDACSGNDPFAPSEGSAEAAPELDLFAMKPPETSVPVVTPTASTAPPVPATAPSPAPAVAAAAAATTAATAAATTTTTTSAATATTAPPALDIFGDLFESTPEVAAAPKPDAAPSIDLFSTDAFSSPPQGASPVPESSLTADLLSVDAFAAPSPATTASPAKVDSSGVIDLFGDAFGSSASEPQPASQAASSSSASADLLAGFGGSFMAPSPSPVTPAQNNLLQPNFEAAFGTTPSTSSSSSFDPSVFDGLGDLLMPTMAPAGQPAPVSMVPPSPAMAASKALGSDLDSSLASLVGNLGISGTTTKKGDLQWNAGEKKLTGGANWQPKVAPATWSAGVPPSAPLQGAVPPTSSVPPVAGAPSVGQPGAGFGMPPAGTGMPMMPQQPVMFAQPMMRPPFGAAAVPGTQLSPSPTPASQSPKKPPAKDPLADLNIKDFL</sequence>
<reference key="1">
    <citation type="journal article" date="1998" name="DNA Res.">
        <title>Prediction of the coding sequences of unidentified human genes. X. The complete sequences of 100 new cDNA clones from brain which can code for large proteins in vitro.</title>
        <authorList>
            <person name="Ishikawa K."/>
            <person name="Nagase T."/>
            <person name="Suyama M."/>
            <person name="Miyajima N."/>
            <person name="Tanaka A."/>
            <person name="Kotani H."/>
            <person name="Nomura N."/>
            <person name="Ohara O."/>
        </authorList>
    </citation>
    <scope>NUCLEOTIDE SEQUENCE [LARGE SCALE MRNA] (ISOFORM 1)</scope>
    <source>
        <tissue>Brain</tissue>
    </source>
</reference>
<reference key="2">
    <citation type="journal article" date="2004" name="Nat. Genet.">
        <title>Complete sequencing and characterization of 21,243 full-length human cDNAs.</title>
        <authorList>
            <person name="Ota T."/>
            <person name="Suzuki Y."/>
            <person name="Nishikawa T."/>
            <person name="Otsuki T."/>
            <person name="Sugiyama T."/>
            <person name="Irie R."/>
            <person name="Wakamatsu A."/>
            <person name="Hayashi K."/>
            <person name="Sato H."/>
            <person name="Nagai K."/>
            <person name="Kimura K."/>
            <person name="Makita H."/>
            <person name="Sekine M."/>
            <person name="Obayashi M."/>
            <person name="Nishi T."/>
            <person name="Shibahara T."/>
            <person name="Tanaka T."/>
            <person name="Ishii S."/>
            <person name="Yamamoto J."/>
            <person name="Saito K."/>
            <person name="Kawai Y."/>
            <person name="Isono Y."/>
            <person name="Nakamura Y."/>
            <person name="Nagahari K."/>
            <person name="Murakami K."/>
            <person name="Yasuda T."/>
            <person name="Iwayanagi T."/>
            <person name="Wagatsuma M."/>
            <person name="Shiratori A."/>
            <person name="Sudo H."/>
            <person name="Hosoiri T."/>
            <person name="Kaku Y."/>
            <person name="Kodaira H."/>
            <person name="Kondo H."/>
            <person name="Sugawara M."/>
            <person name="Takahashi M."/>
            <person name="Kanda K."/>
            <person name="Yokoi T."/>
            <person name="Furuya T."/>
            <person name="Kikkawa E."/>
            <person name="Omura Y."/>
            <person name="Abe K."/>
            <person name="Kamihara K."/>
            <person name="Katsuta N."/>
            <person name="Sato K."/>
            <person name="Tanikawa M."/>
            <person name="Yamazaki M."/>
            <person name="Ninomiya K."/>
            <person name="Ishibashi T."/>
            <person name="Yamashita H."/>
            <person name="Murakawa K."/>
            <person name="Fujimori K."/>
            <person name="Tanai H."/>
            <person name="Kimata M."/>
            <person name="Watanabe M."/>
            <person name="Hiraoka S."/>
            <person name="Chiba Y."/>
            <person name="Ishida S."/>
            <person name="Ono Y."/>
            <person name="Takiguchi S."/>
            <person name="Watanabe S."/>
            <person name="Yosida M."/>
            <person name="Hotuta T."/>
            <person name="Kusano J."/>
            <person name="Kanehori K."/>
            <person name="Takahashi-Fujii A."/>
            <person name="Hara H."/>
            <person name="Tanase T.-O."/>
            <person name="Nomura Y."/>
            <person name="Togiya S."/>
            <person name="Komai F."/>
            <person name="Hara R."/>
            <person name="Takeuchi K."/>
            <person name="Arita M."/>
            <person name="Imose N."/>
            <person name="Musashino K."/>
            <person name="Yuuki H."/>
            <person name="Oshima A."/>
            <person name="Sasaki N."/>
            <person name="Aotsuka S."/>
            <person name="Yoshikawa Y."/>
            <person name="Matsunawa H."/>
            <person name="Ichihara T."/>
            <person name="Shiohata N."/>
            <person name="Sano S."/>
            <person name="Moriya S."/>
            <person name="Momiyama H."/>
            <person name="Satoh N."/>
            <person name="Takami S."/>
            <person name="Terashima Y."/>
            <person name="Suzuki O."/>
            <person name="Nakagawa S."/>
            <person name="Senoh A."/>
            <person name="Mizoguchi H."/>
            <person name="Goto Y."/>
            <person name="Shimizu F."/>
            <person name="Wakebe H."/>
            <person name="Hishigaki H."/>
            <person name="Watanabe T."/>
            <person name="Sugiyama A."/>
            <person name="Takemoto M."/>
            <person name="Kawakami B."/>
            <person name="Yamazaki M."/>
            <person name="Watanabe K."/>
            <person name="Kumagai A."/>
            <person name="Itakura S."/>
            <person name="Fukuzumi Y."/>
            <person name="Fujimori Y."/>
            <person name="Komiyama M."/>
            <person name="Tashiro H."/>
            <person name="Tanigami A."/>
            <person name="Fujiwara T."/>
            <person name="Ono T."/>
            <person name="Yamada K."/>
            <person name="Fujii Y."/>
            <person name="Ozaki K."/>
            <person name="Hirao M."/>
            <person name="Ohmori Y."/>
            <person name="Kawabata A."/>
            <person name="Hikiji T."/>
            <person name="Kobatake N."/>
            <person name="Inagaki H."/>
            <person name="Ikema Y."/>
            <person name="Okamoto S."/>
            <person name="Okitani R."/>
            <person name="Kawakami T."/>
            <person name="Noguchi S."/>
            <person name="Itoh T."/>
            <person name="Shigeta K."/>
            <person name="Senba T."/>
            <person name="Matsumura K."/>
            <person name="Nakajima Y."/>
            <person name="Mizuno T."/>
            <person name="Morinaga M."/>
            <person name="Sasaki M."/>
            <person name="Togashi T."/>
            <person name="Oyama M."/>
            <person name="Hata H."/>
            <person name="Watanabe M."/>
            <person name="Komatsu T."/>
            <person name="Mizushima-Sugano J."/>
            <person name="Satoh T."/>
            <person name="Shirai Y."/>
            <person name="Takahashi Y."/>
            <person name="Nakagawa K."/>
            <person name="Okumura K."/>
            <person name="Nagase T."/>
            <person name="Nomura N."/>
            <person name="Kikuchi H."/>
            <person name="Masuho Y."/>
            <person name="Yamashita R."/>
            <person name="Nakai K."/>
            <person name="Yada T."/>
            <person name="Nakamura Y."/>
            <person name="Ohara O."/>
            <person name="Isogai T."/>
            <person name="Sugano S."/>
        </authorList>
    </citation>
    <scope>NUCLEOTIDE SEQUENCE [LARGE SCALE MRNA] (ISOFORM 1)</scope>
    <source>
        <tissue>Cerebellum</tissue>
    </source>
</reference>
<reference key="3">
    <citation type="journal article" date="2007" name="BMC Genomics">
        <title>The full-ORF clone resource of the German cDNA consortium.</title>
        <authorList>
            <person name="Bechtel S."/>
            <person name="Rosenfelder H."/>
            <person name="Duda A."/>
            <person name="Schmidt C.P."/>
            <person name="Ernst U."/>
            <person name="Wellenreuther R."/>
            <person name="Mehrle A."/>
            <person name="Schuster C."/>
            <person name="Bahr A."/>
            <person name="Bloecker H."/>
            <person name="Heubner D."/>
            <person name="Hoerlein A."/>
            <person name="Michel G."/>
            <person name="Wedler H."/>
            <person name="Koehrer K."/>
            <person name="Ottenwaelder B."/>
            <person name="Poustka A."/>
            <person name="Wiemann S."/>
            <person name="Schupp I."/>
        </authorList>
    </citation>
    <scope>NUCLEOTIDE SEQUENCE [LARGE SCALE MRNA] (ISOFORM 2)</scope>
    <source>
        <tissue>Testis</tissue>
    </source>
</reference>
<reference key="4">
    <citation type="journal article" date="2003" name="Nature">
        <title>The DNA sequence and analysis of human chromosome 6.</title>
        <authorList>
            <person name="Mungall A.J."/>
            <person name="Palmer S.A."/>
            <person name="Sims S.K."/>
            <person name="Edwards C.A."/>
            <person name="Ashurst J.L."/>
            <person name="Wilming L."/>
            <person name="Jones M.C."/>
            <person name="Horton R."/>
            <person name="Hunt S.E."/>
            <person name="Scott C.E."/>
            <person name="Gilbert J.G.R."/>
            <person name="Clamp M.E."/>
            <person name="Bethel G."/>
            <person name="Milne S."/>
            <person name="Ainscough R."/>
            <person name="Almeida J.P."/>
            <person name="Ambrose K.D."/>
            <person name="Andrews T.D."/>
            <person name="Ashwell R.I.S."/>
            <person name="Babbage A.K."/>
            <person name="Bagguley C.L."/>
            <person name="Bailey J."/>
            <person name="Banerjee R."/>
            <person name="Barker D.J."/>
            <person name="Barlow K.F."/>
            <person name="Bates K."/>
            <person name="Beare D.M."/>
            <person name="Beasley H."/>
            <person name="Beasley O."/>
            <person name="Bird C.P."/>
            <person name="Blakey S.E."/>
            <person name="Bray-Allen S."/>
            <person name="Brook J."/>
            <person name="Brown A.J."/>
            <person name="Brown J.Y."/>
            <person name="Burford D.C."/>
            <person name="Burrill W."/>
            <person name="Burton J."/>
            <person name="Carder C."/>
            <person name="Carter N.P."/>
            <person name="Chapman J.C."/>
            <person name="Clark S.Y."/>
            <person name="Clark G."/>
            <person name="Clee C.M."/>
            <person name="Clegg S."/>
            <person name="Cobley V."/>
            <person name="Collier R.E."/>
            <person name="Collins J.E."/>
            <person name="Colman L.K."/>
            <person name="Corby N.R."/>
            <person name="Coville G.J."/>
            <person name="Culley K.M."/>
            <person name="Dhami P."/>
            <person name="Davies J."/>
            <person name="Dunn M."/>
            <person name="Earthrowl M.E."/>
            <person name="Ellington A.E."/>
            <person name="Evans K.A."/>
            <person name="Faulkner L."/>
            <person name="Francis M.D."/>
            <person name="Frankish A."/>
            <person name="Frankland J."/>
            <person name="French L."/>
            <person name="Garner P."/>
            <person name="Garnett J."/>
            <person name="Ghori M.J."/>
            <person name="Gilby L.M."/>
            <person name="Gillson C.J."/>
            <person name="Glithero R.J."/>
            <person name="Grafham D.V."/>
            <person name="Grant M."/>
            <person name="Gribble S."/>
            <person name="Griffiths C."/>
            <person name="Griffiths M.N.D."/>
            <person name="Hall R."/>
            <person name="Halls K.S."/>
            <person name="Hammond S."/>
            <person name="Harley J.L."/>
            <person name="Hart E.A."/>
            <person name="Heath P.D."/>
            <person name="Heathcott R."/>
            <person name="Holmes S.J."/>
            <person name="Howden P.J."/>
            <person name="Howe K.L."/>
            <person name="Howell G.R."/>
            <person name="Huckle E."/>
            <person name="Humphray S.J."/>
            <person name="Humphries M.D."/>
            <person name="Hunt A.R."/>
            <person name="Johnson C.M."/>
            <person name="Joy A.A."/>
            <person name="Kay M."/>
            <person name="Keenan S.J."/>
            <person name="Kimberley A.M."/>
            <person name="King A."/>
            <person name="Laird G.K."/>
            <person name="Langford C."/>
            <person name="Lawlor S."/>
            <person name="Leongamornlert D.A."/>
            <person name="Leversha M."/>
            <person name="Lloyd C.R."/>
            <person name="Lloyd D.M."/>
            <person name="Loveland J.E."/>
            <person name="Lovell J."/>
            <person name="Martin S."/>
            <person name="Mashreghi-Mohammadi M."/>
            <person name="Maslen G.L."/>
            <person name="Matthews L."/>
            <person name="McCann O.T."/>
            <person name="McLaren S.J."/>
            <person name="McLay K."/>
            <person name="McMurray A."/>
            <person name="Moore M.J.F."/>
            <person name="Mullikin J.C."/>
            <person name="Niblett D."/>
            <person name="Nickerson T."/>
            <person name="Novik K.L."/>
            <person name="Oliver K."/>
            <person name="Overton-Larty E.K."/>
            <person name="Parker A."/>
            <person name="Patel R."/>
            <person name="Pearce A.V."/>
            <person name="Peck A.I."/>
            <person name="Phillimore B.J.C.T."/>
            <person name="Phillips S."/>
            <person name="Plumb R.W."/>
            <person name="Porter K.M."/>
            <person name="Ramsey Y."/>
            <person name="Ranby S.A."/>
            <person name="Rice C.M."/>
            <person name="Ross M.T."/>
            <person name="Searle S.M."/>
            <person name="Sehra H.K."/>
            <person name="Sheridan E."/>
            <person name="Skuce C.D."/>
            <person name="Smith S."/>
            <person name="Smith M."/>
            <person name="Spraggon L."/>
            <person name="Squares S.L."/>
            <person name="Steward C.A."/>
            <person name="Sycamore N."/>
            <person name="Tamlyn-Hall G."/>
            <person name="Tester J."/>
            <person name="Theaker A.J."/>
            <person name="Thomas D.W."/>
            <person name="Thorpe A."/>
            <person name="Tracey A."/>
            <person name="Tromans A."/>
            <person name="Tubby B."/>
            <person name="Wall M."/>
            <person name="Wallis J.M."/>
            <person name="West A.P."/>
            <person name="White S.S."/>
            <person name="Whitehead S.L."/>
            <person name="Whittaker H."/>
            <person name="Wild A."/>
            <person name="Willey D.J."/>
            <person name="Wilmer T.E."/>
            <person name="Wood J.M."/>
            <person name="Wray P.W."/>
            <person name="Wyatt J.C."/>
            <person name="Young L."/>
            <person name="Younger R.M."/>
            <person name="Bentley D.R."/>
            <person name="Coulson A."/>
            <person name="Durbin R.M."/>
            <person name="Hubbard T."/>
            <person name="Sulston J.E."/>
            <person name="Dunham I."/>
            <person name="Rogers J."/>
            <person name="Beck S."/>
        </authorList>
    </citation>
    <scope>NUCLEOTIDE SEQUENCE [LARGE SCALE GENOMIC DNA]</scope>
</reference>
<reference key="5">
    <citation type="journal article" date="2004" name="Genome Res.">
        <title>The status, quality, and expansion of the NIH full-length cDNA project: the Mammalian Gene Collection (MGC).</title>
        <authorList>
            <consortium name="The MGC Project Team"/>
        </authorList>
    </citation>
    <scope>NUCLEOTIDE SEQUENCE [LARGE SCALE MRNA] (ISOFORM 3)</scope>
    <source>
        <tissue>Testis</tissue>
    </source>
</reference>
<reference key="6">
    <citation type="submission" date="1998-03" db="EMBL/GenBank/DDBJ databases">
        <authorList>
            <person name="Yu W."/>
            <person name="Gibbs R.A."/>
        </authorList>
    </citation>
    <scope>NUCLEOTIDE SEQUENCE [LARGE SCALE MRNA] OF 794-907</scope>
    <source>
        <tissue>Brain</tissue>
    </source>
</reference>
<reference key="7">
    <citation type="journal article" date="2006" name="PLoS Biol.">
        <title>Role of the AP2 beta-appendage hub in recruiting partners for clathrin-coated vesicle assembly.</title>
        <authorList>
            <person name="Schmid E.M."/>
            <person name="Ford M.G.J."/>
            <person name="Burtey A."/>
            <person name="Praefcke G.J.K."/>
            <person name="Peak-Chew S.-Y."/>
            <person name="Mills I.G."/>
            <person name="Benmerah A."/>
            <person name="McMahon H.T."/>
        </authorList>
    </citation>
    <scope>INTERACTION WITH AP2B1</scope>
</reference>
<proteinExistence type="evidence at protein level"/>
<comment type="function">
    <text evidence="1">Adaptins are components of the adapter complexes which link clathrin to receptors in coated vesicles. Clathrin-associated protein complexes are believed to interact with the cytoplasmic tails of membrane proteins, leading to their selection and concentration. Binding of AP180 to clathrin triskelia induces their assembly into 60-70 nm coats (By similarity).</text>
</comment>
<comment type="subunit">
    <text evidence="1">Binds AP2A2. Interacts with AP2B1; clathrin competes with SNAP91 (By similarity).</text>
</comment>
<comment type="interaction">
    <interactant intactId="EBI-1105187">
        <id>O60641</id>
    </interactant>
    <interactant intactId="EBI-7592476">
        <id>Q9CR95</id>
        <label>Necap1</label>
    </interactant>
    <organismsDiffer>true</organismsDiffer>
    <experiments>2</experiments>
</comment>
<comment type="interaction">
    <interactant intactId="EBI-12854506">
        <id>O60641-3</id>
    </interactant>
    <interactant intactId="EBI-11096309">
        <id>Q9NYB9-2</id>
        <label>ABI2</label>
    </interactant>
    <organismsDiffer>false</organismsDiffer>
    <experiments>3</experiments>
</comment>
<comment type="interaction">
    <interactant intactId="EBI-12854506">
        <id>O60641-3</id>
    </interactant>
    <interactant intactId="EBI-744104">
        <id>P55040</id>
        <label>GEM</label>
    </interactant>
    <organismsDiffer>false</organismsDiffer>
    <experiments>3</experiments>
</comment>
<comment type="interaction">
    <interactant intactId="EBI-12854506">
        <id>O60641-3</id>
    </interactant>
    <interactant intactId="EBI-1955541">
        <id>Q53GS7</id>
        <label>GLE1</label>
    </interactant>
    <organismsDiffer>false</organismsDiffer>
    <experiments>3</experiments>
</comment>
<comment type="interaction">
    <interactant intactId="EBI-12854506">
        <id>O60641-3</id>
    </interactant>
    <interactant intactId="EBI-2548751">
        <id>Q8TD10</id>
        <label>MIPOL1</label>
    </interactant>
    <organismsDiffer>false</organismsDiffer>
    <experiments>3</experiments>
</comment>
<comment type="interaction">
    <interactant intactId="EBI-12854506">
        <id>O60641-3</id>
    </interactant>
    <interactant intactId="EBI-5235340">
        <id>Q7Z699</id>
        <label>SPRED1</label>
    </interactant>
    <organismsDiffer>false</organismsDiffer>
    <experiments>3</experiments>
</comment>
<comment type="subcellular location">
    <subcellularLocation>
        <location evidence="1">Cell membrane</location>
    </subcellularLocation>
    <subcellularLocation>
        <location evidence="1">Membrane</location>
        <location evidence="1">Coated pit</location>
        <topology evidence="1">Peripheral membrane protein</topology>
        <orientation evidence="1">Cytoplasmic side</orientation>
    </subcellularLocation>
    <text evidence="1">Component of the coat surrounding the cytoplasmic face of coated vesicles in the plasma membrane.</text>
</comment>
<comment type="alternative products">
    <event type="alternative splicing"/>
    <isoform>
        <id>O60641-1</id>
        <name>1</name>
        <sequence type="displayed"/>
    </isoform>
    <isoform>
        <id>O60641-2</id>
        <name>2</name>
        <sequence type="described" ref="VSP_020997"/>
    </isoform>
    <isoform>
        <id>O60641-3</id>
        <name>3</name>
        <sequence type="described" ref="VSP_020998 VSP_020999 VSP_021000"/>
    </isoform>
    <isoform>
        <id>O60641-4</id>
        <name>4</name>
        <sequence type="described" ref="VSP_020999 VSP_047049"/>
    </isoform>
</comment>
<comment type="domain">
    <text>Possesses a three domain structure: the N-terminal 300 residues harbor a clathrin binding site, an acidic middle domain 450 residues, interrupted by an Ala-rich segment, and the C-terminal domain (166 residues).</text>
</comment>
<comment type="PTM">
    <text evidence="1">Thr-310 can be modified by the addition of N-acetylglucosamine which can be further phosphorylated. There is no evidence for direct Thr-310 phosphorylation (By similarity).</text>
</comment>
<comment type="miscellaneous">
    <molecule>Isoform 2</molecule>
    <text evidence="8">May be produced at very low levels due to a premature stop codon in the mRNA, leading to nonsense-mediated mRNA decay.</text>
</comment>
<comment type="similarity">
    <text evidence="8">Belongs to the PICALM/SNAP91 family.</text>
</comment>
<comment type="sequence caution" evidence="8">
    <conflict type="erroneous initiation">
        <sequence resource="EMBL-CDS" id="BAA31631"/>
    </conflict>
    <text>Extended N-terminus.</text>
</comment>
<comment type="sequence caution" evidence="8">
    <conflict type="erroneous translation">
        <sequence resource="EMBL-CDS" id="CAH18201"/>
    </conflict>
    <text>Wrong choice of CDS.</text>
</comment>
<feature type="chain" id="PRO_0000193864" description="Clathrin coat assembly protein AP180">
    <location>
        <begin position="1"/>
        <end position="907"/>
    </location>
</feature>
<feature type="domain" description="ENTH" evidence="4">
    <location>
        <begin position="14"/>
        <end position="145"/>
    </location>
</feature>
<feature type="region of interest" description="Disordered" evidence="5">
    <location>
        <begin position="285"/>
        <end position="326"/>
    </location>
</feature>
<feature type="region of interest" description="Disordered" evidence="5">
    <location>
        <begin position="342"/>
        <end position="380"/>
    </location>
</feature>
<feature type="region of interest" description="Disordered" evidence="5">
    <location>
        <begin position="393"/>
        <end position="414"/>
    </location>
</feature>
<feature type="region of interest" description="Disordered" evidence="5">
    <location>
        <begin position="505"/>
        <end position="525"/>
    </location>
</feature>
<feature type="region of interest" description="Disordered" evidence="5">
    <location>
        <begin position="867"/>
        <end position="907"/>
    </location>
</feature>
<feature type="compositionally biased region" description="Polar residues" evidence="5">
    <location>
        <begin position="302"/>
        <end position="324"/>
    </location>
</feature>
<feature type="compositionally biased region" description="Low complexity" evidence="5">
    <location>
        <begin position="505"/>
        <end position="515"/>
    </location>
</feature>
<feature type="compositionally biased region" description="Pro residues" evidence="5">
    <location>
        <begin position="516"/>
        <end position="525"/>
    </location>
</feature>
<feature type="compositionally biased region" description="Basic and acidic residues" evidence="5">
    <location>
        <begin position="893"/>
        <end position="907"/>
    </location>
</feature>
<feature type="modified residue" description="Phosphoserine" evidence="2">
    <location>
        <position position="296"/>
    </location>
</feature>
<feature type="modified residue" description="Phosphoserine" evidence="2">
    <location>
        <position position="300"/>
    </location>
</feature>
<feature type="modified residue" description="Phosphoserine" evidence="2">
    <location>
        <position position="306"/>
    </location>
</feature>
<feature type="modified residue" description="Phosphoserine" evidence="3">
    <location>
        <position position="313"/>
    </location>
</feature>
<feature type="modified residue" description="Phosphothreonine" evidence="3">
    <location>
        <position position="317"/>
    </location>
</feature>
<feature type="modified residue" description="Phosphoserine" evidence="2">
    <location>
        <position position="596"/>
    </location>
</feature>
<feature type="modified residue" description="Phosphoserine" evidence="2">
    <location>
        <position position="602"/>
    </location>
</feature>
<feature type="modified residue" description="Phosphoserine" evidence="2">
    <location>
        <position position="623"/>
    </location>
</feature>
<feature type="modified residue" description="Phosphoserine" evidence="2">
    <location>
        <position position="629"/>
    </location>
</feature>
<feature type="modified residue" description="Phosphoserine" evidence="2">
    <location>
        <position position="763"/>
    </location>
</feature>
<feature type="modified residue" description="Asymmetric dimethylarginine; alternate" evidence="3">
    <location>
        <position position="865"/>
    </location>
</feature>
<feature type="modified residue" description="Omega-N-methylarginine; alternate" evidence="3">
    <location>
        <position position="865"/>
    </location>
</feature>
<feature type="glycosylation site" description="O-linked (GlcNAc) threonine" evidence="1">
    <location>
        <position position="310"/>
    </location>
</feature>
<feature type="splice variant" id="VSP_020997" description="In isoform 2." evidence="7">
    <location>
        <begin position="59"/>
        <end position="907"/>
    </location>
</feature>
<feature type="splice variant" id="VSP_020998" description="In isoform 3." evidence="6">
    <location>
        <begin position="256"/>
        <end position="269"/>
    </location>
</feature>
<feature type="splice variant" id="VSP_020999" description="In isoform 3 and isoform 4." evidence="6">
    <original>NEG</original>
    <variation>K</variation>
    <location>
        <begin position="293"/>
        <end position="295"/>
    </location>
</feature>
<feature type="splice variant" id="VSP_021000" description="In isoform 3." evidence="6">
    <location>
        <begin position="381"/>
        <end position="671"/>
    </location>
</feature>
<feature type="splice variant" id="VSP_047049" description="In isoform 4." evidence="8">
    <location>
        <begin position="616"/>
        <end position="643"/>
    </location>
</feature>
<feature type="sequence conflict" description="In Ref. 5; AAH60818." evidence="8" ref="5">
    <original>Q</original>
    <variation>R</variation>
    <location>
        <position position="4"/>
    </location>
</feature>
<accession>O60641</accession>
<accession>A8K0L7</accession>
<accession>E5RI02</accession>
<accession>Q5JX13</accession>
<accession>Q68DL9</accession>
<accession>Q6P9D3</accession>
<accession>Q9NTY7</accession>
<evidence type="ECO:0000250" key="1"/>
<evidence type="ECO:0000250" key="2">
    <source>
        <dbReference type="UniProtKB" id="Q05140"/>
    </source>
</evidence>
<evidence type="ECO:0000250" key="3">
    <source>
        <dbReference type="UniProtKB" id="Q61548"/>
    </source>
</evidence>
<evidence type="ECO:0000255" key="4">
    <source>
        <dbReference type="PROSITE-ProRule" id="PRU00243"/>
    </source>
</evidence>
<evidence type="ECO:0000256" key="5">
    <source>
        <dbReference type="SAM" id="MobiDB-lite"/>
    </source>
</evidence>
<evidence type="ECO:0000303" key="6">
    <source>
    </source>
</evidence>
<evidence type="ECO:0000303" key="7">
    <source>
    </source>
</evidence>
<evidence type="ECO:0000305" key="8"/>
<gene>
    <name type="primary">SNAP91</name>
    <name type="synonym">KIAA0656</name>
</gene>
<protein>
    <recommendedName>
        <fullName>Clathrin coat assembly protein AP180</fullName>
    </recommendedName>
    <alternativeName>
        <fullName>91 kDa synaptosomal-associated protein</fullName>
    </alternativeName>
    <alternativeName>
        <fullName>Clathrin coat-associated protein AP180</fullName>
    </alternativeName>
    <alternativeName>
        <fullName>Phosphoprotein F1-20</fullName>
    </alternativeName>
</protein>
<organism>
    <name type="scientific">Homo sapiens</name>
    <name type="common">Human</name>
    <dbReference type="NCBI Taxonomy" id="9606"/>
    <lineage>
        <taxon>Eukaryota</taxon>
        <taxon>Metazoa</taxon>
        <taxon>Chordata</taxon>
        <taxon>Craniata</taxon>
        <taxon>Vertebrata</taxon>
        <taxon>Euteleostomi</taxon>
        <taxon>Mammalia</taxon>
        <taxon>Eutheria</taxon>
        <taxon>Euarchontoglires</taxon>
        <taxon>Primates</taxon>
        <taxon>Haplorrhini</taxon>
        <taxon>Catarrhini</taxon>
        <taxon>Hominidae</taxon>
        <taxon>Homo</taxon>
    </lineage>
</organism>
<keyword id="KW-0025">Alternative splicing</keyword>
<keyword id="KW-1003">Cell membrane</keyword>
<keyword id="KW-0168">Coated pit</keyword>
<keyword id="KW-0325">Glycoprotein</keyword>
<keyword id="KW-0472">Membrane</keyword>
<keyword id="KW-0488">Methylation</keyword>
<keyword id="KW-0597">Phosphoprotein</keyword>
<keyword id="KW-0653">Protein transport</keyword>
<keyword id="KW-1267">Proteomics identification</keyword>
<keyword id="KW-1185">Reference proteome</keyword>
<keyword id="KW-0813">Transport</keyword>
<name>AP180_HUMAN</name>